<comment type="function">
    <text evidence="1">Catalyzes the specific phosphorylation of arginine residues in a large number of proteins. Is part of the bacterial stress response system. Protein arginine phosphorylation has a physiologically important role and is involved in the regulation of many critical cellular processes, such as protein homeostasis, motility, competence, and stringent and stress responses, by regulating gene expression and protein activity.</text>
</comment>
<comment type="catalytic activity">
    <reaction evidence="1">
        <text>L-arginyl-[protein] + ATP = N(omega)-phospho-L-arginyl-[protein] + ADP + H(+)</text>
        <dbReference type="Rhea" id="RHEA:43384"/>
        <dbReference type="Rhea" id="RHEA-COMP:10532"/>
        <dbReference type="Rhea" id="RHEA-COMP:10533"/>
        <dbReference type="ChEBI" id="CHEBI:15378"/>
        <dbReference type="ChEBI" id="CHEBI:29965"/>
        <dbReference type="ChEBI" id="CHEBI:30616"/>
        <dbReference type="ChEBI" id="CHEBI:83226"/>
        <dbReference type="ChEBI" id="CHEBI:456216"/>
        <dbReference type="EC" id="2.7.14.1"/>
    </reaction>
</comment>
<comment type="activity regulation">
    <text evidence="1">Appears to be allosterically activated by the binding of pArg-containing polypeptides to the pArg-binding pocket localized in the C-terminal domain of McsB.</text>
</comment>
<comment type="similarity">
    <text evidence="1">Belongs to the ATP:guanido phosphotransferase family.</text>
</comment>
<name>MCSB_BACP2</name>
<sequence length="363" mass="41044">MSLQHFIQDALSQWMKQKGPESDIVLSSRIRLARNLEHVRFPTQFSQEEAQAVLQQFEQKFASQEVKDIGNFVLIRMNETQPLAKRVLVEKHLISPNLAESRFGGCLLSENEEISVMLNEEDHIRIQCLFPGFQLANALKAANQIDDWIEEQVDYAFSEKRGYLTSCPTNVGTGIRASVMMHLPALALTRQMNRIIPAINQLGLVVRGIYGEGSEAIGNIFQISNQMTLGQSEEDIVDDLNSVTAQLIEQERSARKALYQTSKIELEDRVYRSLGILSNCRMIESKETAKCLSDVRLGIDLGIIKGLSSNILNELMILTQPGFLQQYSGGALEPNERDIKRAAIIRERLRLEMHRNGQEDETI</sequence>
<feature type="chain" id="PRO_1000061264" description="Protein-arginine kinase">
    <location>
        <begin position="1"/>
        <end position="363"/>
    </location>
</feature>
<feature type="domain" description="Phosphagen kinase C-terminal" evidence="1">
    <location>
        <begin position="24"/>
        <end position="254"/>
    </location>
</feature>
<feature type="short sequence motif" description="RDXXRA motif of the pArg binding pocket involved in allosteric regulation" evidence="1">
    <location>
        <begin position="337"/>
        <end position="342"/>
    </location>
</feature>
<feature type="binding site" evidence="1">
    <location>
        <begin position="27"/>
        <end position="31"/>
    </location>
    <ligand>
        <name>ATP</name>
        <dbReference type="ChEBI" id="CHEBI:30616"/>
    </ligand>
</feature>
<feature type="binding site" evidence="1">
    <location>
        <position position="92"/>
    </location>
    <ligand>
        <name>ATP</name>
        <dbReference type="ChEBI" id="CHEBI:30616"/>
    </ligand>
</feature>
<feature type="binding site" evidence="1">
    <location>
        <position position="125"/>
    </location>
    <ligand>
        <name>ATP</name>
        <dbReference type="ChEBI" id="CHEBI:30616"/>
    </ligand>
</feature>
<feature type="binding site" evidence="1">
    <location>
        <begin position="176"/>
        <end position="180"/>
    </location>
    <ligand>
        <name>ATP</name>
        <dbReference type="ChEBI" id="CHEBI:30616"/>
    </ligand>
</feature>
<feature type="binding site" evidence="1">
    <location>
        <begin position="207"/>
        <end position="212"/>
    </location>
    <ligand>
        <name>ATP</name>
        <dbReference type="ChEBI" id="CHEBI:30616"/>
    </ligand>
</feature>
<dbReference type="EC" id="2.7.14.1" evidence="1"/>
<dbReference type="EMBL" id="CP000813">
    <property type="protein sequence ID" value="ABV60770.1"/>
    <property type="molecule type" value="Genomic_DNA"/>
</dbReference>
<dbReference type="RefSeq" id="WP_012008685.1">
    <property type="nucleotide sequence ID" value="NZ_VEIC01000024.1"/>
</dbReference>
<dbReference type="SMR" id="A8F953"/>
<dbReference type="STRING" id="315750.BPUM_0070"/>
<dbReference type="GeneID" id="5619314"/>
<dbReference type="KEGG" id="bpu:BPUM_0070"/>
<dbReference type="eggNOG" id="COG3869">
    <property type="taxonomic scope" value="Bacteria"/>
</dbReference>
<dbReference type="HOGENOM" id="CLU_066591_1_0_9"/>
<dbReference type="OrthoDB" id="9791353at2"/>
<dbReference type="Proteomes" id="UP000001355">
    <property type="component" value="Chromosome"/>
</dbReference>
<dbReference type="GO" id="GO:0005615">
    <property type="term" value="C:extracellular space"/>
    <property type="evidence" value="ECO:0007669"/>
    <property type="project" value="TreeGrafter"/>
</dbReference>
<dbReference type="GO" id="GO:0005524">
    <property type="term" value="F:ATP binding"/>
    <property type="evidence" value="ECO:0007669"/>
    <property type="project" value="UniProtKB-KW"/>
</dbReference>
<dbReference type="GO" id="GO:0004111">
    <property type="term" value="F:creatine kinase activity"/>
    <property type="evidence" value="ECO:0007669"/>
    <property type="project" value="InterPro"/>
</dbReference>
<dbReference type="GO" id="GO:0004672">
    <property type="term" value="F:protein kinase activity"/>
    <property type="evidence" value="ECO:0007669"/>
    <property type="project" value="UniProtKB-UniRule"/>
</dbReference>
<dbReference type="GO" id="GO:0046314">
    <property type="term" value="P:phosphocreatine biosynthetic process"/>
    <property type="evidence" value="ECO:0007669"/>
    <property type="project" value="InterPro"/>
</dbReference>
<dbReference type="CDD" id="cd07930">
    <property type="entry name" value="bacterial_phosphagen_kinase"/>
    <property type="match status" value="1"/>
</dbReference>
<dbReference type="FunFam" id="3.30.590.10:FF:000007">
    <property type="entry name" value="Protein-arginine kinase"/>
    <property type="match status" value="1"/>
</dbReference>
<dbReference type="Gene3D" id="3.30.590.10">
    <property type="entry name" value="Glutamine synthetase/guanido kinase, catalytic domain"/>
    <property type="match status" value="1"/>
</dbReference>
<dbReference type="HAMAP" id="MF_00602">
    <property type="entry name" value="Prot_Arg_kinase"/>
    <property type="match status" value="1"/>
</dbReference>
<dbReference type="InterPro" id="IPR023660">
    <property type="entry name" value="Arg_Kinase"/>
</dbReference>
<dbReference type="InterPro" id="IPR000749">
    <property type="entry name" value="ATP-guanido_PTrfase"/>
</dbReference>
<dbReference type="InterPro" id="IPR022415">
    <property type="entry name" value="ATP-guanido_PTrfase_AS"/>
</dbReference>
<dbReference type="InterPro" id="IPR022414">
    <property type="entry name" value="ATP-guanido_PTrfase_cat"/>
</dbReference>
<dbReference type="InterPro" id="IPR014746">
    <property type="entry name" value="Gln_synth/guanido_kin_cat_dom"/>
</dbReference>
<dbReference type="NCBIfam" id="NF002194">
    <property type="entry name" value="PRK01059.1-4"/>
    <property type="match status" value="1"/>
</dbReference>
<dbReference type="NCBIfam" id="NF002195">
    <property type="entry name" value="PRK01059.1-5"/>
    <property type="match status" value="1"/>
</dbReference>
<dbReference type="PANTHER" id="PTHR11547:SF38">
    <property type="entry name" value="ARGININE KINASE 1-RELATED"/>
    <property type="match status" value="1"/>
</dbReference>
<dbReference type="PANTHER" id="PTHR11547">
    <property type="entry name" value="ARGININE OR CREATINE KINASE"/>
    <property type="match status" value="1"/>
</dbReference>
<dbReference type="Pfam" id="PF00217">
    <property type="entry name" value="ATP-gua_Ptrans"/>
    <property type="match status" value="1"/>
</dbReference>
<dbReference type="SUPFAM" id="SSF55931">
    <property type="entry name" value="Glutamine synthetase/guanido kinase"/>
    <property type="match status" value="1"/>
</dbReference>
<dbReference type="PROSITE" id="PS00112">
    <property type="entry name" value="PHOSPHAGEN_KINASE"/>
    <property type="match status" value="1"/>
</dbReference>
<dbReference type="PROSITE" id="PS51510">
    <property type="entry name" value="PHOSPHAGEN_KINASE_C"/>
    <property type="match status" value="1"/>
</dbReference>
<keyword id="KW-0021">Allosteric enzyme</keyword>
<keyword id="KW-0067">ATP-binding</keyword>
<keyword id="KW-0418">Kinase</keyword>
<keyword id="KW-0547">Nucleotide-binding</keyword>
<keyword id="KW-0808">Transferase</keyword>
<proteinExistence type="inferred from homology"/>
<evidence type="ECO:0000255" key="1">
    <source>
        <dbReference type="HAMAP-Rule" id="MF_00602"/>
    </source>
</evidence>
<protein>
    <recommendedName>
        <fullName evidence="1">Protein-arginine kinase</fullName>
        <ecNumber evidence="1">2.7.14.1</ecNumber>
    </recommendedName>
</protein>
<accession>A8F953</accession>
<reference key="1">
    <citation type="journal article" date="2007" name="PLoS ONE">
        <title>Paradoxical DNA repair and peroxide resistance gene conservation in Bacillus pumilus SAFR-032.</title>
        <authorList>
            <person name="Gioia J."/>
            <person name="Yerrapragada S."/>
            <person name="Qin X."/>
            <person name="Jiang H."/>
            <person name="Igboeli O.C."/>
            <person name="Muzny D."/>
            <person name="Dugan-Rocha S."/>
            <person name="Ding Y."/>
            <person name="Hawes A."/>
            <person name="Liu W."/>
            <person name="Perez L."/>
            <person name="Kovar C."/>
            <person name="Dinh H."/>
            <person name="Lee S."/>
            <person name="Nazareth L."/>
            <person name="Blyth P."/>
            <person name="Holder M."/>
            <person name="Buhay C."/>
            <person name="Tirumalai M.R."/>
            <person name="Liu Y."/>
            <person name="Dasgupta I."/>
            <person name="Bokhetache L."/>
            <person name="Fujita M."/>
            <person name="Karouia F."/>
            <person name="Eswara Moorthy P."/>
            <person name="Siefert J."/>
            <person name="Uzman A."/>
            <person name="Buzumbo P."/>
            <person name="Verma A."/>
            <person name="Zwiya H."/>
            <person name="McWilliams B.D."/>
            <person name="Olowu A."/>
            <person name="Clinkenbeard K.D."/>
            <person name="Newcombe D."/>
            <person name="Golebiewski L."/>
            <person name="Petrosino J.F."/>
            <person name="Nicholson W.L."/>
            <person name="Fox G.E."/>
            <person name="Venkateswaran K."/>
            <person name="Highlander S.K."/>
            <person name="Weinstock G.M."/>
        </authorList>
    </citation>
    <scope>NUCLEOTIDE SEQUENCE [LARGE SCALE GENOMIC DNA]</scope>
    <source>
        <strain>SAFR-032</strain>
    </source>
</reference>
<gene>
    <name evidence="1" type="primary">mcsB</name>
    <name type="ordered locus">BPUM_0070</name>
</gene>
<organism>
    <name type="scientific">Bacillus pumilus (strain SAFR-032)</name>
    <dbReference type="NCBI Taxonomy" id="315750"/>
    <lineage>
        <taxon>Bacteria</taxon>
        <taxon>Bacillati</taxon>
        <taxon>Bacillota</taxon>
        <taxon>Bacilli</taxon>
        <taxon>Bacillales</taxon>
        <taxon>Bacillaceae</taxon>
        <taxon>Bacillus</taxon>
    </lineage>
</organism>